<organism>
    <name type="scientific">Pelodiscus sinensis</name>
    <name type="common">Chinese softshell turtle</name>
    <name type="synonym">Trionyx sinensis</name>
    <dbReference type="NCBI Taxonomy" id="13735"/>
    <lineage>
        <taxon>Eukaryota</taxon>
        <taxon>Metazoa</taxon>
        <taxon>Chordata</taxon>
        <taxon>Craniata</taxon>
        <taxon>Vertebrata</taxon>
        <taxon>Euteleostomi</taxon>
        <taxon>Archelosauria</taxon>
        <taxon>Testudinata</taxon>
        <taxon>Testudines</taxon>
        <taxon>Cryptodira</taxon>
        <taxon>Trionychia</taxon>
        <taxon>Trionychidae</taxon>
        <taxon>Pelodiscus</taxon>
    </lineage>
</organism>
<dbReference type="EC" id="3.2.1.17"/>
<dbReference type="PIR" id="JC5493">
    <property type="entry name" value="JC5493"/>
</dbReference>
<dbReference type="PDB" id="2GV0">
    <property type="method" value="X-ray"/>
    <property type="resolution" value="1.90 A"/>
    <property type="chains" value="A=1-131"/>
</dbReference>
<dbReference type="PDBsum" id="2GV0"/>
<dbReference type="SMR" id="Q7LZQ1"/>
<dbReference type="CAZy" id="GH22">
    <property type="family name" value="Glycoside Hydrolase Family 22"/>
</dbReference>
<dbReference type="eggNOG" id="ENOG502RZU4">
    <property type="taxonomic scope" value="Eukaryota"/>
</dbReference>
<dbReference type="HOGENOM" id="CLU_111620_0_1_1"/>
<dbReference type="BRENDA" id="3.2.1.17">
    <property type="organism ID" value="6494"/>
</dbReference>
<dbReference type="EvolutionaryTrace" id="Q7LZQ1"/>
<dbReference type="Proteomes" id="UP000007267">
    <property type="component" value="Unassembled WGS sequence"/>
</dbReference>
<dbReference type="GO" id="GO:0005576">
    <property type="term" value="C:extracellular region"/>
    <property type="evidence" value="ECO:0007669"/>
    <property type="project" value="UniProtKB-SubCell"/>
</dbReference>
<dbReference type="GO" id="GO:0003796">
    <property type="term" value="F:lysozyme activity"/>
    <property type="evidence" value="ECO:0007669"/>
    <property type="project" value="UniProtKB-EC"/>
</dbReference>
<dbReference type="GO" id="GO:0050829">
    <property type="term" value="P:defense response to Gram-negative bacterium"/>
    <property type="evidence" value="ECO:0007669"/>
    <property type="project" value="TreeGrafter"/>
</dbReference>
<dbReference type="GO" id="GO:0050830">
    <property type="term" value="P:defense response to Gram-positive bacterium"/>
    <property type="evidence" value="ECO:0007669"/>
    <property type="project" value="TreeGrafter"/>
</dbReference>
<dbReference type="GO" id="GO:0031640">
    <property type="term" value="P:killing of cells of another organism"/>
    <property type="evidence" value="ECO:0007669"/>
    <property type="project" value="UniProtKB-KW"/>
</dbReference>
<dbReference type="CDD" id="cd16897">
    <property type="entry name" value="LYZ_C"/>
    <property type="match status" value="1"/>
</dbReference>
<dbReference type="FunFam" id="1.10.530.10:FF:000001">
    <property type="entry name" value="Lysozyme C"/>
    <property type="match status" value="1"/>
</dbReference>
<dbReference type="Gene3D" id="1.10.530.10">
    <property type="match status" value="1"/>
</dbReference>
<dbReference type="InterPro" id="IPR001916">
    <property type="entry name" value="Glyco_hydro_22"/>
</dbReference>
<dbReference type="InterPro" id="IPR019799">
    <property type="entry name" value="Glyco_hydro_22_CS"/>
</dbReference>
<dbReference type="InterPro" id="IPR000974">
    <property type="entry name" value="Glyco_hydro_22_lys"/>
</dbReference>
<dbReference type="InterPro" id="IPR023346">
    <property type="entry name" value="Lysozyme-like_dom_sf"/>
</dbReference>
<dbReference type="PANTHER" id="PTHR11407">
    <property type="entry name" value="LYSOZYME C"/>
    <property type="match status" value="1"/>
</dbReference>
<dbReference type="PANTHER" id="PTHR11407:SF28">
    <property type="entry name" value="LYSOZYME C"/>
    <property type="match status" value="1"/>
</dbReference>
<dbReference type="Pfam" id="PF00062">
    <property type="entry name" value="Lys"/>
    <property type="match status" value="1"/>
</dbReference>
<dbReference type="PRINTS" id="PR00137">
    <property type="entry name" value="LYSOZYME"/>
</dbReference>
<dbReference type="PRINTS" id="PR00135">
    <property type="entry name" value="LYZLACT"/>
</dbReference>
<dbReference type="SMART" id="SM00263">
    <property type="entry name" value="LYZ1"/>
    <property type="match status" value="1"/>
</dbReference>
<dbReference type="SUPFAM" id="SSF53955">
    <property type="entry name" value="Lysozyme-like"/>
    <property type="match status" value="1"/>
</dbReference>
<dbReference type="PROSITE" id="PS00128">
    <property type="entry name" value="GLYCOSYL_HYDROL_F22_1"/>
    <property type="match status" value="1"/>
</dbReference>
<dbReference type="PROSITE" id="PS51348">
    <property type="entry name" value="GLYCOSYL_HYDROL_F22_2"/>
    <property type="match status" value="1"/>
</dbReference>
<reference key="1">
    <citation type="journal article" date="2006" name="Comp. Biochem. Physiol.">
        <title>Purification, characterization and comparison of reptile lysozymes.</title>
        <authorList>
            <person name="Thammasirirak S."/>
            <person name="Ponkham P."/>
            <person name="Preecharram S."/>
            <person name="Khanchanuan R."/>
            <person name="Phonyothee P."/>
            <person name="Daduang S."/>
            <person name="Srisomsap C."/>
            <person name="Araki T."/>
            <person name="Svasti J."/>
        </authorList>
    </citation>
    <scope>PROTEIN SEQUENCE</scope>
    <scope>FUNCTION</scope>
    <scope>CATALYTIC ACTIVITY</scope>
    <scope>BIOPHYSICOCHEMICAL PROPERTIES</scope>
    <source>
        <tissue>Egg white</tissue>
    </source>
</reference>
<reference key="2">
    <citation type="journal article" date="2009" name="J. Biochem.">
        <title>The 1.9 A X-ray structure of egg-white lysozyme from Taiwanese soft-shelled turtle (Trionyx Sinensis Wiegmann) exhibits structural differences from the standard chicken-type lysozyme.</title>
        <authorList>
            <person name="Siritapetawee J."/>
            <person name="Thammasirirak S."/>
            <person name="Robinson R.C."/>
            <person name="Yuvaniyama J."/>
        </authorList>
    </citation>
    <scope>X-RAY CRYSTALLOGRAPHY (1.9 ANGSTROMS)</scope>
    <source>
        <tissue>Egg white</tissue>
    </source>
</reference>
<gene>
    <name type="primary">LYZ</name>
</gene>
<feature type="chain" id="PRO_0000208876" description="Lysozyme C">
    <location>
        <begin position="1"/>
        <end position="131"/>
    </location>
</feature>
<feature type="domain" description="C-type lysozyme" evidence="2">
    <location>
        <begin position="2"/>
        <end position="131"/>
    </location>
</feature>
<feature type="active site" evidence="2">
    <location>
        <position position="36"/>
    </location>
</feature>
<feature type="active site" evidence="2">
    <location>
        <position position="54"/>
    </location>
</feature>
<feature type="disulfide bond">
    <location>
        <begin position="7"/>
        <end position="129"/>
    </location>
</feature>
<feature type="disulfide bond">
    <location>
        <begin position="31"/>
        <end position="117"/>
    </location>
</feature>
<feature type="disulfide bond">
    <location>
        <begin position="66"/>
        <end position="82"/>
    </location>
</feature>
<feature type="disulfide bond">
    <location>
        <begin position="78"/>
        <end position="96"/>
    </location>
</feature>
<feature type="helix" evidence="4">
    <location>
        <begin position="6"/>
        <end position="15"/>
    </location>
</feature>
<feature type="helix" evidence="4">
    <location>
        <begin position="21"/>
        <end position="23"/>
    </location>
</feature>
<feature type="helix" evidence="4">
    <location>
        <begin position="26"/>
        <end position="37"/>
    </location>
</feature>
<feature type="strand" evidence="4">
    <location>
        <begin position="44"/>
        <end position="47"/>
    </location>
</feature>
<feature type="turn" evidence="4">
    <location>
        <begin position="48"/>
        <end position="51"/>
    </location>
</feature>
<feature type="strand" evidence="4">
    <location>
        <begin position="52"/>
        <end position="55"/>
    </location>
</feature>
<feature type="turn" evidence="4">
    <location>
        <begin position="56"/>
        <end position="59"/>
    </location>
</feature>
<feature type="turn" evidence="4">
    <location>
        <begin position="62"/>
        <end position="65"/>
    </location>
</feature>
<feature type="helix" evidence="4">
    <location>
        <begin position="82"/>
        <end position="86"/>
    </location>
</feature>
<feature type="helix" evidence="4">
    <location>
        <begin position="91"/>
        <end position="102"/>
    </location>
</feature>
<feature type="helix" evidence="4">
    <location>
        <begin position="106"/>
        <end position="109"/>
    </location>
</feature>
<feature type="helix" evidence="4">
    <location>
        <begin position="111"/>
        <end position="116"/>
    </location>
</feature>
<feature type="turn" evidence="4">
    <location>
        <begin position="117"/>
        <end position="119"/>
    </location>
</feature>
<feature type="helix" evidence="4">
    <location>
        <begin position="123"/>
        <end position="125"/>
    </location>
</feature>
<feature type="turn" evidence="4">
    <location>
        <begin position="126"/>
        <end position="128"/>
    </location>
</feature>
<proteinExistence type="evidence at protein level"/>
<sequence>GKIYEQCELAREFKRHGMDGYHGYSLGDWVCTAKHESNFNTAATNYNRGDQSTDYGILQINSRWWCNDGKTPKAKNACGIECSELLKADITAAVNCAKRIVRDPNGMGAWVAWTKYCKGKDVSQWIKGCKL</sequence>
<protein>
    <recommendedName>
        <fullName>Lysozyme C</fullName>
        <ecNumber>3.2.1.17</ecNumber>
    </recommendedName>
    <alternativeName>
        <fullName>1,4-beta-N-acetylmuramidase C</fullName>
    </alternativeName>
    <alternativeName>
        <fullName>Softshell turtle lysozyme C</fullName>
        <shortName>SSTL</shortName>
    </alternativeName>
</protein>
<accession>Q7LZQ1</accession>
<evidence type="ECO:0000250" key="1"/>
<evidence type="ECO:0000255" key="2">
    <source>
        <dbReference type="PROSITE-ProRule" id="PRU00680"/>
    </source>
</evidence>
<evidence type="ECO:0000269" key="3">
    <source>
    </source>
</evidence>
<evidence type="ECO:0007829" key="4">
    <source>
        <dbReference type="PDB" id="2GV0"/>
    </source>
</evidence>
<comment type="function">
    <text evidence="2 3">Lysozymes have primarily a bacteriolytic function; those in tissues and body fluids are associated with the monocyte-macrophage system and enhance the activity of immunoagents. Has strong bacteriolytic activity against M.luteus and V.cholerae, weak bacteriolytic activity against P.aeruginosa and no activity against A.hydrophila.</text>
</comment>
<comment type="catalytic activity">
    <reaction evidence="3">
        <text>Hydrolysis of (1-&gt;4)-beta-linkages between N-acetylmuramic acid and N-acetyl-D-glucosamine residues in a peptidoglycan and between N-acetyl-D-glucosamine residues in chitodextrins.</text>
        <dbReference type="EC" id="3.2.1.17"/>
    </reaction>
</comment>
<comment type="biophysicochemical properties">
    <phDependence>
        <text evidence="3">Optimum pH is 6.0.</text>
    </phDependence>
    <temperatureDependence>
        <text evidence="3">Optimum temperature is 40 degrees Celsius. Activity rapidly decreases within 30 minutes of incubation at 90 degrees Celsius.</text>
    </temperatureDependence>
</comment>
<comment type="subunit">
    <text evidence="1">Monomer.</text>
</comment>
<comment type="subcellular location">
    <subcellularLocation>
        <location>Secreted</location>
    </subcellularLocation>
</comment>
<comment type="miscellaneous">
    <text>Lysozyme C is capable of both hydrolysis and transglycosylation; it also shows a slight esterase activity. It acts rapidly on both peptide-substituted and unsubstituted peptidoglycan, and slowly on chitin oligosaccharides.</text>
</comment>
<comment type="similarity">
    <text evidence="2">Belongs to the glycosyl hydrolase 22 family.</text>
</comment>
<name>LYSC_PELSI</name>
<keyword id="KW-0002">3D-structure</keyword>
<keyword id="KW-0929">Antimicrobial</keyword>
<keyword id="KW-0081">Bacteriolytic enzyme</keyword>
<keyword id="KW-0903">Direct protein sequencing</keyword>
<keyword id="KW-1015">Disulfide bond</keyword>
<keyword id="KW-0326">Glycosidase</keyword>
<keyword id="KW-0378">Hydrolase</keyword>
<keyword id="KW-1185">Reference proteome</keyword>
<keyword id="KW-0964">Secreted</keyword>